<dbReference type="EC" id="5.6.1.7" evidence="1"/>
<dbReference type="EMBL" id="AE009442">
    <property type="protein sequence ID" value="AAO29380.1"/>
    <property type="molecule type" value="Genomic_DNA"/>
</dbReference>
<dbReference type="RefSeq" id="WP_011098153.1">
    <property type="nucleotide sequence ID" value="NC_004556.1"/>
</dbReference>
<dbReference type="SMR" id="Q87BC0"/>
<dbReference type="GeneID" id="93905365"/>
<dbReference type="KEGG" id="xft:PD_1538"/>
<dbReference type="HOGENOM" id="CLU_016503_3_0_6"/>
<dbReference type="Proteomes" id="UP000002516">
    <property type="component" value="Chromosome"/>
</dbReference>
<dbReference type="GO" id="GO:0005737">
    <property type="term" value="C:cytoplasm"/>
    <property type="evidence" value="ECO:0007669"/>
    <property type="project" value="UniProtKB-SubCell"/>
</dbReference>
<dbReference type="GO" id="GO:0005524">
    <property type="term" value="F:ATP binding"/>
    <property type="evidence" value="ECO:0007669"/>
    <property type="project" value="UniProtKB-UniRule"/>
</dbReference>
<dbReference type="GO" id="GO:0140662">
    <property type="term" value="F:ATP-dependent protein folding chaperone"/>
    <property type="evidence" value="ECO:0007669"/>
    <property type="project" value="InterPro"/>
</dbReference>
<dbReference type="GO" id="GO:0016853">
    <property type="term" value="F:isomerase activity"/>
    <property type="evidence" value="ECO:0007669"/>
    <property type="project" value="UniProtKB-KW"/>
</dbReference>
<dbReference type="GO" id="GO:0051082">
    <property type="term" value="F:unfolded protein binding"/>
    <property type="evidence" value="ECO:0007669"/>
    <property type="project" value="UniProtKB-UniRule"/>
</dbReference>
<dbReference type="GO" id="GO:0042026">
    <property type="term" value="P:protein refolding"/>
    <property type="evidence" value="ECO:0007669"/>
    <property type="project" value="UniProtKB-UniRule"/>
</dbReference>
<dbReference type="CDD" id="cd03344">
    <property type="entry name" value="GroEL"/>
    <property type="match status" value="1"/>
</dbReference>
<dbReference type="FunFam" id="1.10.560.10:FF:000001">
    <property type="entry name" value="60 kDa chaperonin"/>
    <property type="match status" value="1"/>
</dbReference>
<dbReference type="FunFam" id="3.50.7.10:FF:000001">
    <property type="entry name" value="60 kDa chaperonin"/>
    <property type="match status" value="1"/>
</dbReference>
<dbReference type="Gene3D" id="3.50.7.10">
    <property type="entry name" value="GroEL"/>
    <property type="match status" value="1"/>
</dbReference>
<dbReference type="Gene3D" id="1.10.560.10">
    <property type="entry name" value="GroEL-like equatorial domain"/>
    <property type="match status" value="1"/>
</dbReference>
<dbReference type="Gene3D" id="3.30.260.10">
    <property type="entry name" value="TCP-1-like chaperonin intermediate domain"/>
    <property type="match status" value="1"/>
</dbReference>
<dbReference type="HAMAP" id="MF_00600">
    <property type="entry name" value="CH60"/>
    <property type="match status" value="1"/>
</dbReference>
<dbReference type="InterPro" id="IPR018370">
    <property type="entry name" value="Chaperonin_Cpn60_CS"/>
</dbReference>
<dbReference type="InterPro" id="IPR001844">
    <property type="entry name" value="Cpn60/GroEL"/>
</dbReference>
<dbReference type="InterPro" id="IPR002423">
    <property type="entry name" value="Cpn60/GroEL/TCP-1"/>
</dbReference>
<dbReference type="InterPro" id="IPR027409">
    <property type="entry name" value="GroEL-like_apical_dom_sf"/>
</dbReference>
<dbReference type="InterPro" id="IPR027413">
    <property type="entry name" value="GROEL-like_equatorial_sf"/>
</dbReference>
<dbReference type="InterPro" id="IPR027410">
    <property type="entry name" value="TCP-1-like_intermed_sf"/>
</dbReference>
<dbReference type="NCBIfam" id="TIGR02348">
    <property type="entry name" value="GroEL"/>
    <property type="match status" value="1"/>
</dbReference>
<dbReference type="NCBIfam" id="NF000592">
    <property type="entry name" value="PRK00013.1"/>
    <property type="match status" value="1"/>
</dbReference>
<dbReference type="NCBIfam" id="NF009487">
    <property type="entry name" value="PRK12849.1"/>
    <property type="match status" value="1"/>
</dbReference>
<dbReference type="NCBIfam" id="NF009488">
    <property type="entry name" value="PRK12850.1"/>
    <property type="match status" value="1"/>
</dbReference>
<dbReference type="NCBIfam" id="NF009489">
    <property type="entry name" value="PRK12851.1"/>
    <property type="match status" value="1"/>
</dbReference>
<dbReference type="PANTHER" id="PTHR45633">
    <property type="entry name" value="60 KDA HEAT SHOCK PROTEIN, MITOCHONDRIAL"/>
    <property type="match status" value="1"/>
</dbReference>
<dbReference type="Pfam" id="PF00118">
    <property type="entry name" value="Cpn60_TCP1"/>
    <property type="match status" value="1"/>
</dbReference>
<dbReference type="PRINTS" id="PR00298">
    <property type="entry name" value="CHAPERONIN60"/>
</dbReference>
<dbReference type="SUPFAM" id="SSF52029">
    <property type="entry name" value="GroEL apical domain-like"/>
    <property type="match status" value="1"/>
</dbReference>
<dbReference type="SUPFAM" id="SSF48592">
    <property type="entry name" value="GroEL equatorial domain-like"/>
    <property type="match status" value="1"/>
</dbReference>
<dbReference type="SUPFAM" id="SSF54849">
    <property type="entry name" value="GroEL-intermediate domain like"/>
    <property type="match status" value="1"/>
</dbReference>
<dbReference type="PROSITE" id="PS00296">
    <property type="entry name" value="CHAPERONINS_CPN60"/>
    <property type="match status" value="1"/>
</dbReference>
<evidence type="ECO:0000255" key="1">
    <source>
        <dbReference type="HAMAP-Rule" id="MF_00600"/>
    </source>
</evidence>
<evidence type="ECO:0000256" key="2">
    <source>
        <dbReference type="SAM" id="MobiDB-lite"/>
    </source>
</evidence>
<protein>
    <recommendedName>
        <fullName evidence="1">Chaperonin GroEL</fullName>
        <ecNumber evidence="1">5.6.1.7</ecNumber>
    </recommendedName>
    <alternativeName>
        <fullName evidence="1">60 kDa chaperonin</fullName>
    </alternativeName>
    <alternativeName>
        <fullName evidence="1">Chaperonin-60</fullName>
        <shortName evidence="1">Cpn60</shortName>
    </alternativeName>
</protein>
<feature type="chain" id="PRO_0000063611" description="Chaperonin GroEL">
    <location>
        <begin position="1"/>
        <end position="547"/>
    </location>
</feature>
<feature type="region of interest" description="Disordered" evidence="2">
    <location>
        <begin position="524"/>
        <end position="547"/>
    </location>
</feature>
<feature type="compositionally biased region" description="Gly residues" evidence="2">
    <location>
        <begin position="535"/>
        <end position="547"/>
    </location>
</feature>
<feature type="binding site" evidence="1">
    <location>
        <begin position="30"/>
        <end position="33"/>
    </location>
    <ligand>
        <name>ATP</name>
        <dbReference type="ChEBI" id="CHEBI:30616"/>
    </ligand>
</feature>
<feature type="binding site" evidence="1">
    <location>
        <position position="51"/>
    </location>
    <ligand>
        <name>ATP</name>
        <dbReference type="ChEBI" id="CHEBI:30616"/>
    </ligand>
</feature>
<feature type="binding site" evidence="1">
    <location>
        <begin position="87"/>
        <end position="91"/>
    </location>
    <ligand>
        <name>ATP</name>
        <dbReference type="ChEBI" id="CHEBI:30616"/>
    </ligand>
</feature>
<feature type="binding site" evidence="1">
    <location>
        <position position="415"/>
    </location>
    <ligand>
        <name>ATP</name>
        <dbReference type="ChEBI" id="CHEBI:30616"/>
    </ligand>
</feature>
<feature type="binding site" evidence="1">
    <location>
        <begin position="479"/>
        <end position="481"/>
    </location>
    <ligand>
        <name>ATP</name>
        <dbReference type="ChEBI" id="CHEBI:30616"/>
    </ligand>
</feature>
<feature type="binding site" evidence="1">
    <location>
        <position position="495"/>
    </location>
    <ligand>
        <name>ATP</name>
        <dbReference type="ChEBI" id="CHEBI:30616"/>
    </ligand>
</feature>
<name>CH60_XYLFT</name>
<organism>
    <name type="scientific">Xylella fastidiosa (strain Temecula1 / ATCC 700964)</name>
    <dbReference type="NCBI Taxonomy" id="183190"/>
    <lineage>
        <taxon>Bacteria</taxon>
        <taxon>Pseudomonadati</taxon>
        <taxon>Pseudomonadota</taxon>
        <taxon>Gammaproteobacteria</taxon>
        <taxon>Lysobacterales</taxon>
        <taxon>Lysobacteraceae</taxon>
        <taxon>Xylella</taxon>
    </lineage>
</organism>
<sequence length="547" mass="57775">MAAKEIIFSEKARSRMVHGVNLLANAVKATLGPKGRHVVLDKSFGSPIITKDGVSVAKEIELADKFENMGAQMLKEVASKTNDHAGDGTTTATVLAQALIREGCKAVAAGMNPMDLKRGIDKAVIAAVTELKKISKPTSDDKAIAQVATISANSDESIGNIIAEAMKKVGKEGVITIEEGTTLENELDVVEGMQFDRGYSSPYFINNQQSQIVELDNPYILLHDKKISSVRDLLTVLDAVAKESKPLLIVAEEVEGEALATLVVNNIRGIIKVCAVKAPGFGDRRKAMLEDMAVLTGGTVISEEVGLSLEKATTSHLGKAKKVRVSKENTTIIDGMGDNDAINGRVKQIKTQIEETTSDYDREKLQERVAKLAGGVAVIKVGAATEVEMKEKKARVDDALLATRAAVEEGVIPGGGVALIRAITAISNLKGANEDQTHGIQIALRAMEAPLREIVANAGEEPSVILNKVKEGKDNFGYNAATGEFGDMVNLGILDPTKVTRSALQNAASIAGLMITTEAMVAEAPKKDEPTPPAAGGGMGGMGGMDF</sequence>
<comment type="function">
    <text evidence="1">Together with its co-chaperonin GroES, plays an essential role in assisting protein folding. The GroEL-GroES system forms a nano-cage that allows encapsulation of the non-native substrate proteins and provides a physical environment optimized to promote and accelerate protein folding.</text>
</comment>
<comment type="catalytic activity">
    <reaction evidence="1">
        <text>ATP + H2O + a folded polypeptide = ADP + phosphate + an unfolded polypeptide.</text>
        <dbReference type="EC" id="5.6.1.7"/>
    </reaction>
</comment>
<comment type="subunit">
    <text evidence="1">Forms a cylinder of 14 subunits composed of two heptameric rings stacked back-to-back. Interacts with the co-chaperonin GroES.</text>
</comment>
<comment type="subcellular location">
    <subcellularLocation>
        <location evidence="1">Cytoplasm</location>
    </subcellularLocation>
</comment>
<comment type="similarity">
    <text evidence="1">Belongs to the chaperonin (HSP60) family.</text>
</comment>
<gene>
    <name evidence="1" type="primary">groEL</name>
    <name evidence="1" type="synonym">groL</name>
    <name type="synonym">mopA</name>
    <name type="ordered locus">PD_1538</name>
</gene>
<proteinExistence type="inferred from homology"/>
<accession>Q87BC0</accession>
<reference key="1">
    <citation type="journal article" date="2003" name="J. Bacteriol.">
        <title>Comparative analyses of the complete genome sequences of Pierce's disease and citrus variegated chlorosis strains of Xylella fastidiosa.</title>
        <authorList>
            <person name="Van Sluys M.A."/>
            <person name="de Oliveira M.C."/>
            <person name="Monteiro-Vitorello C.B."/>
            <person name="Miyaki C.Y."/>
            <person name="Furlan L.R."/>
            <person name="Camargo L.E.A."/>
            <person name="da Silva A.C.R."/>
            <person name="Moon D.H."/>
            <person name="Takita M.A."/>
            <person name="Lemos E.G.M."/>
            <person name="Machado M.A."/>
            <person name="Ferro M.I.T."/>
            <person name="da Silva F.R."/>
            <person name="Goldman M.H.S."/>
            <person name="Goldman G.H."/>
            <person name="Lemos M.V.F."/>
            <person name="El-Dorry H."/>
            <person name="Tsai S.M."/>
            <person name="Carrer H."/>
            <person name="Carraro D.M."/>
            <person name="de Oliveira R.C."/>
            <person name="Nunes L.R."/>
            <person name="Siqueira W.J."/>
            <person name="Coutinho L.L."/>
            <person name="Kimura E.T."/>
            <person name="Ferro E.S."/>
            <person name="Harakava R."/>
            <person name="Kuramae E.E."/>
            <person name="Marino C.L."/>
            <person name="Giglioti E."/>
            <person name="Abreu I.L."/>
            <person name="Alves L.M.C."/>
            <person name="do Amaral A.M."/>
            <person name="Baia G.S."/>
            <person name="Blanco S.R."/>
            <person name="Brito M.S."/>
            <person name="Cannavan F.S."/>
            <person name="Celestino A.V."/>
            <person name="da Cunha A.F."/>
            <person name="Fenille R.C."/>
            <person name="Ferro J.A."/>
            <person name="Formighieri E.F."/>
            <person name="Kishi L.T."/>
            <person name="Leoni S.G."/>
            <person name="Oliveira A.R."/>
            <person name="Rosa V.E. Jr."/>
            <person name="Sassaki F.T."/>
            <person name="Sena J.A.D."/>
            <person name="de Souza A.A."/>
            <person name="Truffi D."/>
            <person name="Tsukumo F."/>
            <person name="Yanai G.M."/>
            <person name="Zaros L.G."/>
            <person name="Civerolo E.L."/>
            <person name="Simpson A.J.G."/>
            <person name="Almeida N.F. Jr."/>
            <person name="Setubal J.C."/>
            <person name="Kitajima J.P."/>
        </authorList>
    </citation>
    <scope>NUCLEOTIDE SEQUENCE [LARGE SCALE GENOMIC DNA]</scope>
    <source>
        <strain>Temecula1 / ATCC 700964</strain>
    </source>
</reference>
<keyword id="KW-0067">ATP-binding</keyword>
<keyword id="KW-0143">Chaperone</keyword>
<keyword id="KW-0963">Cytoplasm</keyword>
<keyword id="KW-0413">Isomerase</keyword>
<keyword id="KW-0547">Nucleotide-binding</keyword>
<keyword id="KW-1185">Reference proteome</keyword>